<accession>Q6L147</accession>
<keyword id="KW-1003">Cell membrane</keyword>
<keyword id="KW-0350">Heme biosynthesis</keyword>
<keyword id="KW-0472">Membrane</keyword>
<keyword id="KW-0808">Transferase</keyword>
<keyword id="KW-0812">Transmembrane</keyword>
<keyword id="KW-1133">Transmembrane helix</keyword>
<proteinExistence type="inferred from homology"/>
<sequence>MNKAYMYMNKLRAYFIYSKPQVWWLLVFIGLIGSILAINSFKSYLIILLLVALVANMTGSMGAEGLTNYIDRDMDSIMERTRNRPLPSGEISEKGAFLFGIILSLFSIFILLIFKRYLAALFMFLGLFDNVFIYSYLLKRRTPYSIILGGFSGAFPVLIGWYTVTDRFSWIPFILFFLVMFWIPVHVWSLAYKYRDDYYRAGVPMLPVVYSDRKTAVSISLSSMLLILFSVIPYFLGFFNYLYLLVILILSVPIVIYSVNFIKKPTKKASMRLFIYTAPYLTFVFFIVMIIHIIEIIK</sequence>
<gene>
    <name evidence="1" type="primary">ctaB1</name>
    <name type="ordered locus">PTO0720</name>
</gene>
<dbReference type="EC" id="2.5.1.141" evidence="1"/>
<dbReference type="EMBL" id="AE017261">
    <property type="protein sequence ID" value="AAT43305.1"/>
    <property type="molecule type" value="Genomic_DNA"/>
</dbReference>
<dbReference type="RefSeq" id="WP_011177521.1">
    <property type="nucleotide sequence ID" value="NC_005877.1"/>
</dbReference>
<dbReference type="SMR" id="Q6L147"/>
<dbReference type="STRING" id="263820.PTO0720"/>
<dbReference type="PaxDb" id="263820-PTO0720"/>
<dbReference type="GeneID" id="2845193"/>
<dbReference type="KEGG" id="pto:PTO0720"/>
<dbReference type="PATRIC" id="fig|263820.9.peg.755"/>
<dbReference type="eggNOG" id="arCOG00479">
    <property type="taxonomic scope" value="Archaea"/>
</dbReference>
<dbReference type="HOGENOM" id="CLU_029631_0_1_2"/>
<dbReference type="InParanoid" id="Q6L147"/>
<dbReference type="OrthoDB" id="131615at2157"/>
<dbReference type="UniPathway" id="UPA00834">
    <property type="reaction ID" value="UER00712"/>
</dbReference>
<dbReference type="Proteomes" id="UP000000438">
    <property type="component" value="Chromosome"/>
</dbReference>
<dbReference type="GO" id="GO:0005886">
    <property type="term" value="C:plasma membrane"/>
    <property type="evidence" value="ECO:0007669"/>
    <property type="project" value="UniProtKB-SubCell"/>
</dbReference>
<dbReference type="GO" id="GO:0008495">
    <property type="term" value="F:protoheme IX farnesyltransferase activity"/>
    <property type="evidence" value="ECO:0007669"/>
    <property type="project" value="UniProtKB-UniRule"/>
</dbReference>
<dbReference type="GO" id="GO:0048034">
    <property type="term" value="P:heme O biosynthetic process"/>
    <property type="evidence" value="ECO:0007669"/>
    <property type="project" value="UniProtKB-UniRule"/>
</dbReference>
<dbReference type="CDD" id="cd13957">
    <property type="entry name" value="PT_UbiA_Cox10"/>
    <property type="match status" value="1"/>
</dbReference>
<dbReference type="Gene3D" id="1.10.357.140">
    <property type="entry name" value="UbiA prenyltransferase"/>
    <property type="match status" value="1"/>
</dbReference>
<dbReference type="HAMAP" id="MF_00154">
    <property type="entry name" value="CyoE_CtaB"/>
    <property type="match status" value="1"/>
</dbReference>
<dbReference type="InterPro" id="IPR006369">
    <property type="entry name" value="Protohaem_IX_farnesylTrfase"/>
</dbReference>
<dbReference type="InterPro" id="IPR000537">
    <property type="entry name" value="UbiA_prenyltransferase"/>
</dbReference>
<dbReference type="InterPro" id="IPR044878">
    <property type="entry name" value="UbiA_sf"/>
</dbReference>
<dbReference type="NCBIfam" id="TIGR01473">
    <property type="entry name" value="cyoE_ctaB"/>
    <property type="match status" value="1"/>
</dbReference>
<dbReference type="NCBIfam" id="NF003349">
    <property type="entry name" value="PRK04375.1-2"/>
    <property type="match status" value="1"/>
</dbReference>
<dbReference type="PANTHER" id="PTHR43448">
    <property type="entry name" value="PROTOHEME IX FARNESYLTRANSFERASE, MITOCHONDRIAL"/>
    <property type="match status" value="1"/>
</dbReference>
<dbReference type="PANTHER" id="PTHR43448:SF2">
    <property type="entry name" value="PROTOHEME IX FARNESYLTRANSFERASE, MITOCHONDRIAL"/>
    <property type="match status" value="1"/>
</dbReference>
<dbReference type="Pfam" id="PF01040">
    <property type="entry name" value="UbiA"/>
    <property type="match status" value="1"/>
</dbReference>
<evidence type="ECO:0000255" key="1">
    <source>
        <dbReference type="HAMAP-Rule" id="MF_00154"/>
    </source>
</evidence>
<protein>
    <recommendedName>
        <fullName evidence="1">Protoheme IX farnesyltransferase 1</fullName>
        <ecNumber evidence="1">2.5.1.141</ecNumber>
    </recommendedName>
    <alternativeName>
        <fullName evidence="1">Heme B farnesyltransferase 1</fullName>
    </alternativeName>
    <alternativeName>
        <fullName evidence="1">Heme O synthase 1</fullName>
    </alternativeName>
</protein>
<comment type="function">
    <text evidence="1">Converts heme B (protoheme IX) to heme O by substitution of the vinyl group on carbon 2 of heme B porphyrin ring with a hydroxyethyl farnesyl side group.</text>
</comment>
<comment type="catalytic activity">
    <reaction evidence="1">
        <text>heme b + (2E,6E)-farnesyl diphosphate + H2O = Fe(II)-heme o + diphosphate</text>
        <dbReference type="Rhea" id="RHEA:28070"/>
        <dbReference type="ChEBI" id="CHEBI:15377"/>
        <dbReference type="ChEBI" id="CHEBI:33019"/>
        <dbReference type="ChEBI" id="CHEBI:60344"/>
        <dbReference type="ChEBI" id="CHEBI:60530"/>
        <dbReference type="ChEBI" id="CHEBI:175763"/>
        <dbReference type="EC" id="2.5.1.141"/>
    </reaction>
</comment>
<comment type="pathway">
    <text evidence="1">Porphyrin-containing compound metabolism; heme O biosynthesis; heme O from protoheme: step 1/1.</text>
</comment>
<comment type="subcellular location">
    <subcellularLocation>
        <location evidence="1">Cell membrane</location>
        <topology evidence="1">Multi-pass membrane protein</topology>
    </subcellularLocation>
</comment>
<comment type="miscellaneous">
    <text evidence="1">Carbon 2 of the heme B porphyrin ring is defined according to the Fischer nomenclature.</text>
</comment>
<comment type="similarity">
    <text evidence="1">Belongs to the UbiA prenyltransferase family. Protoheme IX farnesyltransferase subfamily.</text>
</comment>
<feature type="chain" id="PRO_0000327196" description="Protoheme IX farnesyltransferase 1">
    <location>
        <begin position="1"/>
        <end position="298"/>
    </location>
</feature>
<feature type="transmembrane region" description="Helical" evidence="1">
    <location>
        <begin position="21"/>
        <end position="41"/>
    </location>
</feature>
<feature type="transmembrane region" description="Helical" evidence="1">
    <location>
        <begin position="43"/>
        <end position="63"/>
    </location>
</feature>
<feature type="transmembrane region" description="Helical" evidence="1">
    <location>
        <begin position="94"/>
        <end position="114"/>
    </location>
</feature>
<feature type="transmembrane region" description="Helical" evidence="1">
    <location>
        <begin position="118"/>
        <end position="138"/>
    </location>
</feature>
<feature type="transmembrane region" description="Helical" evidence="1">
    <location>
        <begin position="144"/>
        <end position="164"/>
    </location>
</feature>
<feature type="transmembrane region" description="Helical" evidence="1">
    <location>
        <begin position="168"/>
        <end position="188"/>
    </location>
</feature>
<feature type="transmembrane region" description="Helical" evidence="1">
    <location>
        <begin position="215"/>
        <end position="235"/>
    </location>
</feature>
<feature type="transmembrane region" description="Helical" evidence="1">
    <location>
        <begin position="236"/>
        <end position="256"/>
    </location>
</feature>
<feature type="transmembrane region" description="Helical" evidence="1">
    <location>
        <begin position="274"/>
        <end position="294"/>
    </location>
</feature>
<name>COXX1_PICTO</name>
<organism>
    <name type="scientific">Picrophilus torridus (strain ATCC 700027 / DSM 9790 / JCM 10055 / NBRC 100828 / KAW 2/3)</name>
    <dbReference type="NCBI Taxonomy" id="1122961"/>
    <lineage>
        <taxon>Archaea</taxon>
        <taxon>Methanobacteriati</taxon>
        <taxon>Thermoplasmatota</taxon>
        <taxon>Thermoplasmata</taxon>
        <taxon>Thermoplasmatales</taxon>
        <taxon>Picrophilaceae</taxon>
        <taxon>Picrophilus</taxon>
    </lineage>
</organism>
<reference key="1">
    <citation type="journal article" date="2004" name="Proc. Natl. Acad. Sci. U.S.A.">
        <title>Genome sequence of Picrophilus torridus and its implications for life around pH 0.</title>
        <authorList>
            <person name="Fuetterer O."/>
            <person name="Angelov A."/>
            <person name="Liesegang H."/>
            <person name="Gottschalk G."/>
            <person name="Schleper C."/>
            <person name="Schepers B."/>
            <person name="Dock C."/>
            <person name="Antranikian G."/>
            <person name="Liebl W."/>
        </authorList>
    </citation>
    <scope>NUCLEOTIDE SEQUENCE [LARGE SCALE GENOMIC DNA]</scope>
    <source>
        <strain>ATCC 700027 / DSM 9790 / JCM 10055 / NBRC 100828 / KAW 2/3</strain>
    </source>
</reference>